<reference key="1">
    <citation type="journal article" date="2002" name="Nucleic Acids Res.">
        <title>Genome sequence of Shigella flexneri 2a: insights into pathogenicity through comparison with genomes of Escherichia coli K12 and O157.</title>
        <authorList>
            <person name="Jin Q."/>
            <person name="Yuan Z."/>
            <person name="Xu J."/>
            <person name="Wang Y."/>
            <person name="Shen Y."/>
            <person name="Lu W."/>
            <person name="Wang J."/>
            <person name="Liu H."/>
            <person name="Yang J."/>
            <person name="Yang F."/>
            <person name="Zhang X."/>
            <person name="Zhang J."/>
            <person name="Yang G."/>
            <person name="Wu H."/>
            <person name="Qu D."/>
            <person name="Dong J."/>
            <person name="Sun L."/>
            <person name="Xue Y."/>
            <person name="Zhao A."/>
            <person name="Gao Y."/>
            <person name="Zhu J."/>
            <person name="Kan B."/>
            <person name="Ding K."/>
            <person name="Chen S."/>
            <person name="Cheng H."/>
            <person name="Yao Z."/>
            <person name="He B."/>
            <person name="Chen R."/>
            <person name="Ma D."/>
            <person name="Qiang B."/>
            <person name="Wen Y."/>
            <person name="Hou Y."/>
            <person name="Yu J."/>
        </authorList>
    </citation>
    <scope>NUCLEOTIDE SEQUENCE [LARGE SCALE GENOMIC DNA]</scope>
    <source>
        <strain>301 / Serotype 2a</strain>
    </source>
</reference>
<reference key="2">
    <citation type="journal article" date="2003" name="Infect. Immun.">
        <title>Complete genome sequence and comparative genomics of Shigella flexneri serotype 2a strain 2457T.</title>
        <authorList>
            <person name="Wei J."/>
            <person name="Goldberg M.B."/>
            <person name="Burland V."/>
            <person name="Venkatesan M.M."/>
            <person name="Deng W."/>
            <person name="Fournier G."/>
            <person name="Mayhew G.F."/>
            <person name="Plunkett G. III"/>
            <person name="Rose D.J."/>
            <person name="Darling A."/>
            <person name="Mau B."/>
            <person name="Perna N.T."/>
            <person name="Payne S.M."/>
            <person name="Runyen-Janecky L.J."/>
            <person name="Zhou S."/>
            <person name="Schwartz D.C."/>
            <person name="Blattner F.R."/>
        </authorList>
    </citation>
    <scope>NUCLEOTIDE SEQUENCE [LARGE SCALE GENOMIC DNA]</scope>
    <source>
        <strain>ATCC 700930 / 2457T / Serotype 2a</strain>
    </source>
</reference>
<gene>
    <name evidence="2" type="primary">dmsD</name>
    <name type="ordered locus">SF1612</name>
    <name type="ordered locus">S1744</name>
</gene>
<feature type="initiator methionine" description="Removed" evidence="1">
    <location>
        <position position="1"/>
    </location>
</feature>
<feature type="chain" id="PRO_0000211655" description="Tat proofreading chaperone DmsD">
    <location>
        <begin position="2"/>
        <end position="204"/>
    </location>
</feature>
<organism>
    <name type="scientific">Shigella flexneri</name>
    <dbReference type="NCBI Taxonomy" id="623"/>
    <lineage>
        <taxon>Bacteria</taxon>
        <taxon>Pseudomonadati</taxon>
        <taxon>Pseudomonadota</taxon>
        <taxon>Gammaproteobacteria</taxon>
        <taxon>Enterobacterales</taxon>
        <taxon>Enterobacteriaceae</taxon>
        <taxon>Shigella</taxon>
    </lineage>
</organism>
<evidence type="ECO:0000250" key="1"/>
<evidence type="ECO:0000255" key="2">
    <source>
        <dbReference type="HAMAP-Rule" id="MF_00940"/>
    </source>
</evidence>
<accession>P69855</accession>
<accession>P76174</accession>
<accession>P77270</accession>
<protein>
    <recommendedName>
        <fullName evidence="2">Tat proofreading chaperone DmsD</fullName>
    </recommendedName>
    <alternativeName>
        <fullName evidence="2">DMSO reductase maturation protein</fullName>
    </alternativeName>
    <alternativeName>
        <fullName evidence="2">Twin-arginine leader-binding protein DmsD</fullName>
    </alternativeName>
</protein>
<comment type="function">
    <text evidence="2">Required for biogenesis/assembly of DMSO reductase, but not for the interaction of the DmsA signal peptide with the Tat system. May be part of a chaperone cascade complex that facilitates a folding-maturation pathway for the substrate protein.</text>
</comment>
<comment type="similarity">
    <text evidence="2">Belongs to the TorD/DmsD family. DmsD subfamily.</text>
</comment>
<sequence>MTHFSQQDNFSVAARVLGALFYYAPESAEAAPLVAVLTSDGWETQWPLPEASLAPLVTAFQTQCEETHAQAWQRLFVGPWALPSPPWGSVWLDRESVLFGDSTLALRQWMREKGIQFEMKQNEPEDHFGSLLLMAAWLAENGRQTECEELLAWHLFPWSTRFLDVFIEKAEHPFYRALGELARLTLAQWQSQLLIPVAVKPLFR</sequence>
<proteinExistence type="inferred from homology"/>
<dbReference type="EMBL" id="AE005674">
    <property type="protein sequence ID" value="AAN43196.2"/>
    <property type="molecule type" value="Genomic_DNA"/>
</dbReference>
<dbReference type="EMBL" id="AE014073">
    <property type="protein sequence ID" value="AAP17084.1"/>
    <property type="molecule type" value="Genomic_DNA"/>
</dbReference>
<dbReference type="RefSeq" id="NP_707489.2">
    <property type="nucleotide sequence ID" value="NC_004337.2"/>
</dbReference>
<dbReference type="RefSeq" id="WP_000148710.1">
    <property type="nucleotide sequence ID" value="NZ_WPGW01000024.1"/>
</dbReference>
<dbReference type="BMRB" id="P69855"/>
<dbReference type="SMR" id="P69855"/>
<dbReference type="STRING" id="198214.SF1612"/>
<dbReference type="PaxDb" id="198214-SF1612"/>
<dbReference type="GeneID" id="1024778"/>
<dbReference type="GeneID" id="93775734"/>
<dbReference type="KEGG" id="sfl:SF1612"/>
<dbReference type="KEGG" id="sfx:S1744"/>
<dbReference type="PATRIC" id="fig|198214.7.peg.1905"/>
<dbReference type="HOGENOM" id="CLU_077650_7_1_6"/>
<dbReference type="Proteomes" id="UP000001006">
    <property type="component" value="Chromosome"/>
</dbReference>
<dbReference type="Proteomes" id="UP000002673">
    <property type="component" value="Chromosome"/>
</dbReference>
<dbReference type="GO" id="GO:0005048">
    <property type="term" value="F:signal sequence binding"/>
    <property type="evidence" value="ECO:0007669"/>
    <property type="project" value="InterPro"/>
</dbReference>
<dbReference type="GO" id="GO:0061077">
    <property type="term" value="P:chaperone-mediated protein folding"/>
    <property type="evidence" value="ECO:0007669"/>
    <property type="project" value="UniProtKB-UniRule"/>
</dbReference>
<dbReference type="FunFam" id="1.10.3480.10:FF:000002">
    <property type="entry name" value="Tat proofreading chaperone DmsD"/>
    <property type="match status" value="1"/>
</dbReference>
<dbReference type="Gene3D" id="1.10.3480.10">
    <property type="entry name" value="TorD-like"/>
    <property type="match status" value="1"/>
</dbReference>
<dbReference type="HAMAP" id="MF_00940">
    <property type="entry name" value="DmsD_chaperone"/>
    <property type="match status" value="1"/>
</dbReference>
<dbReference type="InterPro" id="IPR026269">
    <property type="entry name" value="DmsD-type"/>
</dbReference>
<dbReference type="InterPro" id="IPR028611">
    <property type="entry name" value="DmsD_chaperone"/>
</dbReference>
<dbReference type="InterPro" id="IPR020945">
    <property type="entry name" value="DMSO/NO3_reduct_chaperone"/>
</dbReference>
<dbReference type="InterPro" id="IPR036411">
    <property type="entry name" value="TorD-like_sf"/>
</dbReference>
<dbReference type="InterPro" id="IPR050289">
    <property type="entry name" value="TorD/DmsD_chaperones"/>
</dbReference>
<dbReference type="NCBIfam" id="NF008632">
    <property type="entry name" value="PRK11621.1"/>
    <property type="match status" value="1"/>
</dbReference>
<dbReference type="PANTHER" id="PTHR34227">
    <property type="entry name" value="CHAPERONE PROTEIN YCDY"/>
    <property type="match status" value="1"/>
</dbReference>
<dbReference type="PANTHER" id="PTHR34227:SF6">
    <property type="entry name" value="TAT PROOFREADING CHAPERONE DMSD"/>
    <property type="match status" value="1"/>
</dbReference>
<dbReference type="Pfam" id="PF02613">
    <property type="entry name" value="Nitrate_red_del"/>
    <property type="match status" value="1"/>
</dbReference>
<dbReference type="PIRSF" id="PIRSF004690">
    <property type="entry name" value="DmsD"/>
    <property type="match status" value="1"/>
</dbReference>
<dbReference type="SUPFAM" id="SSF89155">
    <property type="entry name" value="TorD-like"/>
    <property type="match status" value="1"/>
</dbReference>
<name>DMSD_SHIFL</name>
<keyword id="KW-0143">Chaperone</keyword>
<keyword id="KW-1185">Reference proteome</keyword>